<feature type="chain" id="PRO_0000090043" description="6-phosphogluconate dehydrogenase, decarboxylating">
    <location>
        <begin position="1"/>
        <end position="468"/>
    </location>
</feature>
<feature type="active site" description="Proton acceptor" evidence="1">
    <location>
        <position position="183"/>
    </location>
</feature>
<feature type="active site" description="Proton donor" evidence="1">
    <location>
        <position position="190"/>
    </location>
</feature>
<feature type="binding site" evidence="1">
    <location>
        <begin position="10"/>
        <end position="15"/>
    </location>
    <ligand>
        <name>NADP(+)</name>
        <dbReference type="ChEBI" id="CHEBI:58349"/>
    </ligand>
</feature>
<feature type="binding site" evidence="1">
    <location>
        <begin position="33"/>
        <end position="35"/>
    </location>
    <ligand>
        <name>NADP(+)</name>
        <dbReference type="ChEBI" id="CHEBI:58349"/>
    </ligand>
</feature>
<feature type="binding site" evidence="1">
    <location>
        <begin position="74"/>
        <end position="76"/>
    </location>
    <ligand>
        <name>NADP(+)</name>
        <dbReference type="ChEBI" id="CHEBI:58349"/>
    </ligand>
</feature>
<feature type="binding site" evidence="1">
    <location>
        <position position="102"/>
    </location>
    <ligand>
        <name>NADP(+)</name>
        <dbReference type="ChEBI" id="CHEBI:58349"/>
    </ligand>
</feature>
<feature type="binding site" description="in other chain" evidence="1">
    <location>
        <position position="102"/>
    </location>
    <ligand>
        <name>substrate</name>
        <note>ligand shared between dimeric partners</note>
    </ligand>
</feature>
<feature type="binding site" description="in other chain" evidence="1">
    <location>
        <begin position="128"/>
        <end position="130"/>
    </location>
    <ligand>
        <name>substrate</name>
        <note>ligand shared between dimeric partners</note>
    </ligand>
</feature>
<feature type="binding site" description="in other chain" evidence="1">
    <location>
        <begin position="186"/>
        <end position="187"/>
    </location>
    <ligand>
        <name>substrate</name>
        <note>ligand shared between dimeric partners</note>
    </ligand>
</feature>
<feature type="binding site" description="in other chain" evidence="1">
    <location>
        <position position="191"/>
    </location>
    <ligand>
        <name>substrate</name>
        <note>ligand shared between dimeric partners</note>
    </ligand>
</feature>
<feature type="binding site" description="in other chain" evidence="1">
    <location>
        <position position="260"/>
    </location>
    <ligand>
        <name>substrate</name>
        <note>ligand shared between dimeric partners</note>
    </ligand>
</feature>
<feature type="binding site" description="in other chain" evidence="1">
    <location>
        <position position="287"/>
    </location>
    <ligand>
        <name>substrate</name>
        <note>ligand shared between dimeric partners</note>
    </ligand>
</feature>
<feature type="binding site" evidence="1">
    <location>
        <position position="445"/>
    </location>
    <ligand>
        <name>substrate</name>
        <note>ligand shared between dimeric partners</note>
    </ligand>
</feature>
<feature type="binding site" evidence="1">
    <location>
        <position position="451"/>
    </location>
    <ligand>
        <name>substrate</name>
        <note>ligand shared between dimeric partners</note>
    </ligand>
</feature>
<feature type="sequence conflict" description="In Ref. 2; AAC43817." evidence="2" ref="2">
    <original>G</original>
    <variation>E</variation>
    <location>
        <position position="316"/>
    </location>
</feature>
<feature type="sequence conflict" description="In Ref. 2; AAC43817." evidence="2" ref="2">
    <original>V</original>
    <variation>F</variation>
    <location>
        <position position="421"/>
    </location>
</feature>
<sequence>MSKQQIGVVGMAVMGRNLALNIESRGYTVSVFNRSREKTEEVIAENTGKKLVPYYTVQEFVESLETPRRILLMVKAGAGTDSAIDSLKPYLDKGDIIIDGGNTFFQDTIRRNRELSAEGFNFIGTGVSGGEEGALKGPSIMPGGQKEAYELVAPILKQIAAVAEDGEPCVTYIGADGAGHYVKMVHNGIEYGDMQLIAEAYALLKGGLALSNEELAQTFTEWNEGELSSYLIDITKDIFTKKDEEGKYLVDVILDEAANKGTGKWTSQSSLDLGEPLSLITESVFARYISSLKDQRVAASKVLSGPQAQPVGDKAGFIEKVRRALYLGKIVSYAQGFSQLRAASDEYNWDLNYGEIAKIFRAGCIIRAQFLQKITDAYAQNAGIANLLLAPYFKQIADDYQQALRDVVAYAVQNGIPVPTVSAAIAYYDSYRSAVLPANLIQAQRDYFGAHTYKRTDKEGVFHTEWLE</sequence>
<comment type="function">
    <text evidence="1">Catalyzes the oxidative decarboxylation of 6-phosphogluconate to ribulose 5-phosphate and CO(2), with concomitant reduction of NADP to NADPH.</text>
</comment>
<comment type="catalytic activity">
    <reaction>
        <text>6-phospho-D-gluconate + NADP(+) = D-ribulose 5-phosphate + CO2 + NADPH</text>
        <dbReference type="Rhea" id="RHEA:10116"/>
        <dbReference type="ChEBI" id="CHEBI:16526"/>
        <dbReference type="ChEBI" id="CHEBI:57783"/>
        <dbReference type="ChEBI" id="CHEBI:58121"/>
        <dbReference type="ChEBI" id="CHEBI:58349"/>
        <dbReference type="ChEBI" id="CHEBI:58759"/>
        <dbReference type="EC" id="1.1.1.44"/>
    </reaction>
</comment>
<comment type="pathway">
    <text>Carbohydrate degradation; pentose phosphate pathway; D-ribulose 5-phosphate from D-glucose 6-phosphate (oxidative stage): step 3/3.</text>
</comment>
<comment type="subunit">
    <text evidence="1">Homodimer.</text>
</comment>
<comment type="similarity">
    <text evidence="2">Belongs to the 6-phosphogluconate dehydrogenase family.</text>
</comment>
<proteinExistence type="inferred from homology"/>
<organism>
    <name type="scientific">Klebsiella pneumoniae</name>
    <dbReference type="NCBI Taxonomy" id="573"/>
    <lineage>
        <taxon>Bacteria</taxon>
        <taxon>Pseudomonadati</taxon>
        <taxon>Pseudomonadota</taxon>
        <taxon>Gammaproteobacteria</taxon>
        <taxon>Enterobacterales</taxon>
        <taxon>Enterobacteriaceae</taxon>
        <taxon>Klebsiella/Raoultella group</taxon>
        <taxon>Klebsiella</taxon>
        <taxon>Klebsiella pneumoniae complex</taxon>
    </lineage>
</organism>
<evidence type="ECO:0000250" key="1"/>
<evidence type="ECO:0000305" key="2"/>
<dbReference type="EC" id="1.1.1.44"/>
<dbReference type="EMBL" id="D21242">
    <property type="protein sequence ID" value="BAA04786.1"/>
    <property type="molecule type" value="Genomic_DNA"/>
</dbReference>
<dbReference type="EMBL" id="U14471">
    <property type="protein sequence ID" value="AAC43817.1"/>
    <property type="molecule type" value="Genomic_DNA"/>
</dbReference>
<dbReference type="PIR" id="D56146">
    <property type="entry name" value="D56146"/>
</dbReference>
<dbReference type="SMR" id="P41576"/>
<dbReference type="UniPathway" id="UPA00115">
    <property type="reaction ID" value="UER00410"/>
</dbReference>
<dbReference type="GO" id="GO:0050661">
    <property type="term" value="F:NADP binding"/>
    <property type="evidence" value="ECO:0007669"/>
    <property type="project" value="InterPro"/>
</dbReference>
<dbReference type="GO" id="GO:0004616">
    <property type="term" value="F:phosphogluconate dehydrogenase (decarboxylating) activity"/>
    <property type="evidence" value="ECO:0000250"/>
    <property type="project" value="UniProtKB"/>
</dbReference>
<dbReference type="GO" id="GO:0019521">
    <property type="term" value="P:D-gluconate metabolic process"/>
    <property type="evidence" value="ECO:0007669"/>
    <property type="project" value="UniProtKB-KW"/>
</dbReference>
<dbReference type="GO" id="GO:0016054">
    <property type="term" value="P:organic acid catabolic process"/>
    <property type="evidence" value="ECO:0007669"/>
    <property type="project" value="UniProtKB-ARBA"/>
</dbReference>
<dbReference type="GO" id="GO:0006098">
    <property type="term" value="P:pentose-phosphate shunt"/>
    <property type="evidence" value="ECO:0000250"/>
    <property type="project" value="UniProtKB"/>
</dbReference>
<dbReference type="FunFam" id="1.10.1040.10:FF:000002">
    <property type="entry name" value="6-phosphogluconate dehydrogenase, decarboxylating"/>
    <property type="match status" value="1"/>
</dbReference>
<dbReference type="FunFam" id="1.20.5.320:FF:000001">
    <property type="entry name" value="6-phosphogluconate dehydrogenase, decarboxylating"/>
    <property type="match status" value="1"/>
</dbReference>
<dbReference type="FunFam" id="3.40.50.720:FF:000007">
    <property type="entry name" value="6-phosphogluconate dehydrogenase, decarboxylating"/>
    <property type="match status" value="1"/>
</dbReference>
<dbReference type="Gene3D" id="1.20.5.320">
    <property type="entry name" value="6-Phosphogluconate Dehydrogenase, domain 3"/>
    <property type="match status" value="1"/>
</dbReference>
<dbReference type="Gene3D" id="1.10.1040.10">
    <property type="entry name" value="N-(1-d-carboxylethyl)-l-norvaline Dehydrogenase, domain 2"/>
    <property type="match status" value="1"/>
</dbReference>
<dbReference type="Gene3D" id="3.40.50.720">
    <property type="entry name" value="NAD(P)-binding Rossmann-like Domain"/>
    <property type="match status" value="1"/>
</dbReference>
<dbReference type="InterPro" id="IPR008927">
    <property type="entry name" value="6-PGluconate_DH-like_C_sf"/>
</dbReference>
<dbReference type="InterPro" id="IPR013328">
    <property type="entry name" value="6PGD_dom2"/>
</dbReference>
<dbReference type="InterPro" id="IPR006114">
    <property type="entry name" value="6PGDH_C"/>
</dbReference>
<dbReference type="InterPro" id="IPR006113">
    <property type="entry name" value="6PGDH_Gnd/GntZ"/>
</dbReference>
<dbReference type="InterPro" id="IPR006115">
    <property type="entry name" value="6PGDH_NADP-bd"/>
</dbReference>
<dbReference type="InterPro" id="IPR006184">
    <property type="entry name" value="6PGdom_BS"/>
</dbReference>
<dbReference type="InterPro" id="IPR036291">
    <property type="entry name" value="NAD(P)-bd_dom_sf"/>
</dbReference>
<dbReference type="InterPro" id="IPR006183">
    <property type="entry name" value="Pgluconate_DH"/>
</dbReference>
<dbReference type="NCBIfam" id="TIGR00873">
    <property type="entry name" value="gnd"/>
    <property type="match status" value="1"/>
</dbReference>
<dbReference type="NCBIfam" id="NF006765">
    <property type="entry name" value="PRK09287.1"/>
    <property type="match status" value="1"/>
</dbReference>
<dbReference type="PANTHER" id="PTHR11811">
    <property type="entry name" value="6-PHOSPHOGLUCONATE DEHYDROGENASE"/>
    <property type="match status" value="1"/>
</dbReference>
<dbReference type="Pfam" id="PF00393">
    <property type="entry name" value="6PGD"/>
    <property type="match status" value="1"/>
</dbReference>
<dbReference type="Pfam" id="PF03446">
    <property type="entry name" value="NAD_binding_2"/>
    <property type="match status" value="1"/>
</dbReference>
<dbReference type="PIRSF" id="PIRSF000109">
    <property type="entry name" value="6PGD"/>
    <property type="match status" value="1"/>
</dbReference>
<dbReference type="PRINTS" id="PR00076">
    <property type="entry name" value="6PGDHDRGNASE"/>
</dbReference>
<dbReference type="SMART" id="SM01350">
    <property type="entry name" value="6PGD"/>
    <property type="match status" value="1"/>
</dbReference>
<dbReference type="SUPFAM" id="SSF48179">
    <property type="entry name" value="6-phosphogluconate dehydrogenase C-terminal domain-like"/>
    <property type="match status" value="1"/>
</dbReference>
<dbReference type="SUPFAM" id="SSF51735">
    <property type="entry name" value="NAD(P)-binding Rossmann-fold domains"/>
    <property type="match status" value="1"/>
</dbReference>
<dbReference type="PROSITE" id="PS00461">
    <property type="entry name" value="6PGD"/>
    <property type="match status" value="1"/>
</dbReference>
<name>6PGD_KLEPN</name>
<keyword id="KW-0311">Gluconate utilization</keyword>
<keyword id="KW-0521">NADP</keyword>
<keyword id="KW-0560">Oxidoreductase</keyword>
<keyword id="KW-0570">Pentose shunt</keyword>
<protein>
    <recommendedName>
        <fullName>6-phosphogluconate dehydrogenase, decarboxylating</fullName>
        <ecNumber>1.1.1.44</ecNumber>
    </recommendedName>
</protein>
<reference key="1">
    <citation type="journal article" date="1995" name="J. Bacteriol.">
        <title>Genomic organization of the Klebsiella pneumoniae cps region responsible for serotype K2 capsular polysaccharide synthesis in the virulent strain Chedid.</title>
        <authorList>
            <person name="Arakawa Y."/>
            <person name="Wacharotayankun R."/>
            <person name="Nagatsuka T."/>
            <person name="Ito H."/>
            <person name="Kato N."/>
            <person name="Ohta M."/>
        </authorList>
    </citation>
    <scope>NUCLEOTIDE SEQUENCE [GENOMIC DNA]</scope>
    <source>
        <strain>Chedid</strain>
    </source>
</reference>
<reference key="2">
    <citation type="journal article" date="1994" name="Proc. Natl. Acad. Sci. U.S.A.">
        <title>Intergeneric transfer and recombination of the 6-phosphogluconate dehydrogenase gene (gnd) in enteric bacteria.</title>
        <authorList>
            <person name="Nelson K."/>
            <person name="Selander R.K."/>
        </authorList>
    </citation>
    <scope>NUCLEOTIDE SEQUENCE [GENOMIC DNA] OF 12-456</scope>
    <source>
        <strain>CW 7380</strain>
    </source>
</reference>
<gene>
    <name type="primary">gnd</name>
</gene>
<accession>P41576</accession>
<accession>Q48461</accession>